<proteinExistence type="inferred from homology"/>
<accession>C1C814</accession>
<reference key="1">
    <citation type="journal article" date="2010" name="Genome Biol.">
        <title>Structure and dynamics of the pan-genome of Streptococcus pneumoniae and closely related species.</title>
        <authorList>
            <person name="Donati C."/>
            <person name="Hiller N.L."/>
            <person name="Tettelin H."/>
            <person name="Muzzi A."/>
            <person name="Croucher N.J."/>
            <person name="Angiuoli S.V."/>
            <person name="Oggioni M."/>
            <person name="Dunning Hotopp J.C."/>
            <person name="Hu F.Z."/>
            <person name="Riley D.R."/>
            <person name="Covacci A."/>
            <person name="Mitchell T.J."/>
            <person name="Bentley S.D."/>
            <person name="Kilian M."/>
            <person name="Ehrlich G.D."/>
            <person name="Rappuoli R."/>
            <person name="Moxon E.R."/>
            <person name="Masignani V."/>
        </authorList>
    </citation>
    <scope>NUCLEOTIDE SEQUENCE [LARGE SCALE GENOMIC DNA]</scope>
    <source>
        <strain>70585</strain>
    </source>
</reference>
<sequence length="235" mass="25729">MKVIKVENQVQGGKVAFEILKEKLANGAQTLGLATGSSPLEFYKEIVESNLDFSNLTSVNLDEYVGLDGDNPQSYRYFMQENLFNQKPFKESFLPRGVKDNAEAEVERYNQILADHPVDLQILGIGRNGHIGFNEPGTPFDSQTHLVELDQSTIEANARFFAKIEDVPTQAISMGIKNILDAKSIILFAYGESKAEAIAGTVSGPVTENLPASSLQNHPDVTIIADAEALSLLEK</sequence>
<comment type="function">
    <text evidence="1">Catalyzes the reversible isomerization-deamination of glucosamine 6-phosphate (GlcN6P) to form fructose 6-phosphate (Fru6P) and ammonium ion.</text>
</comment>
<comment type="catalytic activity">
    <reaction evidence="1">
        <text>alpha-D-glucosamine 6-phosphate + H2O = beta-D-fructose 6-phosphate + NH4(+)</text>
        <dbReference type="Rhea" id="RHEA:12172"/>
        <dbReference type="ChEBI" id="CHEBI:15377"/>
        <dbReference type="ChEBI" id="CHEBI:28938"/>
        <dbReference type="ChEBI" id="CHEBI:57634"/>
        <dbReference type="ChEBI" id="CHEBI:75989"/>
        <dbReference type="EC" id="3.5.99.6"/>
    </reaction>
</comment>
<comment type="pathway">
    <text evidence="1">Amino-sugar metabolism; N-acetylneuraminate degradation; D-fructose 6-phosphate from N-acetylneuraminate: step 5/5.</text>
</comment>
<comment type="similarity">
    <text evidence="1">Belongs to the glucosamine/galactosamine-6-phosphate isomerase family. NagB subfamily.</text>
</comment>
<name>NAGB_STRP7</name>
<protein>
    <recommendedName>
        <fullName evidence="1">Glucosamine-6-phosphate deaminase</fullName>
        <ecNumber evidence="1">3.5.99.6</ecNumber>
    </recommendedName>
    <alternativeName>
        <fullName evidence="1">GlcN6P deaminase</fullName>
        <shortName evidence="1">GNPDA</shortName>
    </alternativeName>
    <alternativeName>
        <fullName evidence="1">Glucosamine-6-phosphate isomerase</fullName>
    </alternativeName>
</protein>
<dbReference type="EC" id="3.5.99.6" evidence="1"/>
<dbReference type="EMBL" id="CP000918">
    <property type="protein sequence ID" value="ACO15933.1"/>
    <property type="molecule type" value="Genomic_DNA"/>
</dbReference>
<dbReference type="RefSeq" id="WP_000864623.1">
    <property type="nucleotide sequence ID" value="NC_012468.1"/>
</dbReference>
<dbReference type="SMR" id="C1C814"/>
<dbReference type="KEGG" id="snm:SP70585_1454"/>
<dbReference type="HOGENOM" id="CLU_049611_1_0_9"/>
<dbReference type="UniPathway" id="UPA00629">
    <property type="reaction ID" value="UER00684"/>
</dbReference>
<dbReference type="Proteomes" id="UP000002211">
    <property type="component" value="Chromosome"/>
</dbReference>
<dbReference type="GO" id="GO:0005737">
    <property type="term" value="C:cytoplasm"/>
    <property type="evidence" value="ECO:0007669"/>
    <property type="project" value="TreeGrafter"/>
</dbReference>
<dbReference type="GO" id="GO:0004342">
    <property type="term" value="F:glucosamine-6-phosphate deaminase activity"/>
    <property type="evidence" value="ECO:0007669"/>
    <property type="project" value="UniProtKB-UniRule"/>
</dbReference>
<dbReference type="GO" id="GO:0042802">
    <property type="term" value="F:identical protein binding"/>
    <property type="evidence" value="ECO:0007669"/>
    <property type="project" value="TreeGrafter"/>
</dbReference>
<dbReference type="GO" id="GO:0005975">
    <property type="term" value="P:carbohydrate metabolic process"/>
    <property type="evidence" value="ECO:0007669"/>
    <property type="project" value="InterPro"/>
</dbReference>
<dbReference type="GO" id="GO:0006043">
    <property type="term" value="P:glucosamine catabolic process"/>
    <property type="evidence" value="ECO:0007669"/>
    <property type="project" value="TreeGrafter"/>
</dbReference>
<dbReference type="GO" id="GO:0006046">
    <property type="term" value="P:N-acetylglucosamine catabolic process"/>
    <property type="evidence" value="ECO:0007669"/>
    <property type="project" value="TreeGrafter"/>
</dbReference>
<dbReference type="GO" id="GO:0019262">
    <property type="term" value="P:N-acetylneuraminate catabolic process"/>
    <property type="evidence" value="ECO:0007669"/>
    <property type="project" value="UniProtKB-UniRule"/>
</dbReference>
<dbReference type="CDD" id="cd01399">
    <property type="entry name" value="GlcN6P_deaminase"/>
    <property type="match status" value="1"/>
</dbReference>
<dbReference type="FunFam" id="3.40.50.1360:FF:000003">
    <property type="entry name" value="Glucosamine-6-phosphate deaminase"/>
    <property type="match status" value="1"/>
</dbReference>
<dbReference type="Gene3D" id="3.40.50.1360">
    <property type="match status" value="1"/>
</dbReference>
<dbReference type="HAMAP" id="MF_01241">
    <property type="entry name" value="GlcN6P_deamin"/>
    <property type="match status" value="1"/>
</dbReference>
<dbReference type="InterPro" id="IPR006148">
    <property type="entry name" value="Glc/Gal-6P_isomerase"/>
</dbReference>
<dbReference type="InterPro" id="IPR004547">
    <property type="entry name" value="Glucosamine6P_isomerase"/>
</dbReference>
<dbReference type="InterPro" id="IPR018321">
    <property type="entry name" value="Glucosamine6P_isomerase_CS"/>
</dbReference>
<dbReference type="InterPro" id="IPR037171">
    <property type="entry name" value="NagB/RpiA_transferase-like"/>
</dbReference>
<dbReference type="PANTHER" id="PTHR11280">
    <property type="entry name" value="GLUCOSAMINE-6-PHOSPHATE ISOMERASE"/>
    <property type="match status" value="1"/>
</dbReference>
<dbReference type="PANTHER" id="PTHR11280:SF5">
    <property type="entry name" value="GLUCOSAMINE-6-PHOSPHATE ISOMERASE"/>
    <property type="match status" value="1"/>
</dbReference>
<dbReference type="Pfam" id="PF01182">
    <property type="entry name" value="Glucosamine_iso"/>
    <property type="match status" value="1"/>
</dbReference>
<dbReference type="SUPFAM" id="SSF100950">
    <property type="entry name" value="NagB/RpiA/CoA transferase-like"/>
    <property type="match status" value="1"/>
</dbReference>
<dbReference type="PROSITE" id="PS01161">
    <property type="entry name" value="GLC_GALNAC_ISOMERASE"/>
    <property type="match status" value="1"/>
</dbReference>
<keyword id="KW-0119">Carbohydrate metabolism</keyword>
<keyword id="KW-0378">Hydrolase</keyword>
<gene>
    <name evidence="1" type="primary">nagB</name>
    <name type="ordered locus">SP70585_1454</name>
</gene>
<feature type="chain" id="PRO_1000165026" description="Glucosamine-6-phosphate deaminase">
    <location>
        <begin position="1"/>
        <end position="235"/>
    </location>
</feature>
<feature type="active site" description="Proton acceptor; for enolization step" evidence="1">
    <location>
        <position position="62"/>
    </location>
</feature>
<feature type="active site" description="For ring-opening step" evidence="1">
    <location>
        <position position="128"/>
    </location>
</feature>
<feature type="active site" description="Proton acceptor; for ring-opening step" evidence="1">
    <location>
        <position position="130"/>
    </location>
</feature>
<feature type="active site" description="For ring-opening step" evidence="1">
    <location>
        <position position="135"/>
    </location>
</feature>
<evidence type="ECO:0000255" key="1">
    <source>
        <dbReference type="HAMAP-Rule" id="MF_01241"/>
    </source>
</evidence>
<organism>
    <name type="scientific">Streptococcus pneumoniae (strain 70585)</name>
    <dbReference type="NCBI Taxonomy" id="488221"/>
    <lineage>
        <taxon>Bacteria</taxon>
        <taxon>Bacillati</taxon>
        <taxon>Bacillota</taxon>
        <taxon>Bacilli</taxon>
        <taxon>Lactobacillales</taxon>
        <taxon>Streptococcaceae</taxon>
        <taxon>Streptococcus</taxon>
    </lineage>
</organism>